<protein>
    <recommendedName>
        <fullName>DNA polymerase catalytic subunit</fullName>
        <ecNumber>2.7.7.7</ecNumber>
    </recommendedName>
</protein>
<gene>
    <name type="primary">U38</name>
</gene>
<sequence length="1012" mass="115764">MDLVSFFNPYLENVRTKKKTKSTFLRIFPRGIMHDGAPGLMKTLCDSEPRMFYQDKQYILKNDMTWPSLSQVAEKELRAPLKFHIYDASESLLFTDSIENIPFQYRHFVIPSGNVIKLFGKTECGKKVCINVFGQNSYFYCEYQCKKELNSRICSLLNSSEIKMSCSFSIESVTKYNFYGYNTEPIKNLFKLSFSNFYISNRIGKILLNEGVSVYEAEVEILNRFFIDNNLKSFGWYQINYLSIQEFAKSSNVEIELNCHVSDLFLLKEDSWPLYDCCSFDIECLSQNGNFPDAEQMVTSSLISVIDFDSEGNYQSKHLFTLGTCEQIEGVFIYEFASEFELLYAFFLFLKCKSPEILTGYNIINFDLKYLCTRMEKIYNFEIGGFSKLKRGKFSVIVPYEQHKKFLNSLTKVNMSGILCFDMYNVYSSKISAQNYKLDTIAKLCLNQEKENLSYKEIPKKFIDGSKGRAVVGRYCIQDSLLVVQLFTKINYHYEMAEVASLAYITIRCAVFEGQQKKIFPCILHEAKNLNMILPSMNTNFNKGKENVGYKGATVLEPKIGYYATPTVVFDFQSLYPSIMMAHNLCYSTLVVDENAVIGLHADDILTVHVGPVTHRFVKKTVRESILASLLKKWLDKRKEVKMQMKMCNNPVMEMLLDKKQLALKTTCNSVYGVTGATHSLLPCVAIAASVTCLGREMLCKTVDYVDSAMYSDTFFIEKFGLTRGDFSGTFGIEVIYGDTDSLFVTFKNVCPKALKRIAPSIASHITNTLFKHPIKLEFEKILFPLILICKKRYIGKLDDATLVFKGVELVRKTSCDFVKVVVKDIIDLLFWDVDVQKSAEKLSNMTIQEIYENGVPDGIQKIIKKLCDARDALFLNRVNIKSLVLSSVLSKDISAYKQANLPHLAVVKRLAQRKEELPNIGDRVMYILIAPTETVKKTFHNYELAEDPAYAIENNLKINADKYFEQIMKAVTNAISPIFPKTGIKKEKFLLSILPLKVYVDQSFCDLTDVL</sequence>
<organismHost>
    <name type="scientific">Homo sapiens</name>
    <name type="common">Human</name>
    <dbReference type="NCBI Taxonomy" id="9606"/>
</organismHost>
<comment type="catalytic activity">
    <reaction>
        <text>DNA(n) + a 2'-deoxyribonucleoside 5'-triphosphate = DNA(n+1) + diphosphate</text>
        <dbReference type="Rhea" id="RHEA:22508"/>
        <dbReference type="Rhea" id="RHEA-COMP:17339"/>
        <dbReference type="Rhea" id="RHEA-COMP:17340"/>
        <dbReference type="ChEBI" id="CHEBI:33019"/>
        <dbReference type="ChEBI" id="CHEBI:61560"/>
        <dbReference type="ChEBI" id="CHEBI:173112"/>
        <dbReference type="EC" id="2.7.7.7"/>
    </reaction>
</comment>
<comment type="subcellular location">
    <subcellularLocation>
        <location>Host nucleus</location>
    </subcellularLocation>
</comment>
<comment type="similarity">
    <text evidence="1">Belongs to the DNA polymerase type-B family.</text>
</comment>
<accession>P52342</accession>
<name>DPOL_HHV7J</name>
<dbReference type="EC" id="2.7.7.7"/>
<dbReference type="EMBL" id="U43400">
    <property type="protein sequence ID" value="AAC54700.1"/>
    <property type="molecule type" value="Genomic_DNA"/>
</dbReference>
<dbReference type="PIR" id="T41940">
    <property type="entry name" value="T41940"/>
</dbReference>
<dbReference type="SMR" id="P52342"/>
<dbReference type="Proteomes" id="UP000009246">
    <property type="component" value="Segment"/>
</dbReference>
<dbReference type="GO" id="GO:0042025">
    <property type="term" value="C:host cell nucleus"/>
    <property type="evidence" value="ECO:0007669"/>
    <property type="project" value="UniProtKB-SubCell"/>
</dbReference>
<dbReference type="GO" id="GO:0003677">
    <property type="term" value="F:DNA binding"/>
    <property type="evidence" value="ECO:0007669"/>
    <property type="project" value="UniProtKB-KW"/>
</dbReference>
<dbReference type="GO" id="GO:0003887">
    <property type="term" value="F:DNA-directed DNA polymerase activity"/>
    <property type="evidence" value="ECO:0007669"/>
    <property type="project" value="UniProtKB-KW"/>
</dbReference>
<dbReference type="GO" id="GO:0000166">
    <property type="term" value="F:nucleotide binding"/>
    <property type="evidence" value="ECO:0007669"/>
    <property type="project" value="InterPro"/>
</dbReference>
<dbReference type="GO" id="GO:0006261">
    <property type="term" value="P:DNA-templated DNA replication"/>
    <property type="evidence" value="ECO:0007669"/>
    <property type="project" value="TreeGrafter"/>
</dbReference>
<dbReference type="GO" id="GO:0039693">
    <property type="term" value="P:viral DNA genome replication"/>
    <property type="evidence" value="ECO:0007669"/>
    <property type="project" value="UniProtKB-KW"/>
</dbReference>
<dbReference type="Gene3D" id="1.10.132.60">
    <property type="entry name" value="DNA polymerase family B, C-terminal domain"/>
    <property type="match status" value="1"/>
</dbReference>
<dbReference type="Gene3D" id="3.30.342.10">
    <property type="entry name" value="DNA Polymerase, chain B, domain 1"/>
    <property type="match status" value="1"/>
</dbReference>
<dbReference type="Gene3D" id="1.10.287.690">
    <property type="entry name" value="Helix hairpin bin"/>
    <property type="match status" value="1"/>
</dbReference>
<dbReference type="Gene3D" id="3.90.1600.10">
    <property type="entry name" value="Palm domain of DNA polymerase"/>
    <property type="match status" value="1"/>
</dbReference>
<dbReference type="Gene3D" id="3.30.420.10">
    <property type="entry name" value="Ribonuclease H-like superfamily/Ribonuclease H"/>
    <property type="match status" value="1"/>
</dbReference>
<dbReference type="InterPro" id="IPR006172">
    <property type="entry name" value="DNA-dir_DNA_pol_B"/>
</dbReference>
<dbReference type="InterPro" id="IPR017964">
    <property type="entry name" value="DNA-dir_DNA_pol_B_CS"/>
</dbReference>
<dbReference type="InterPro" id="IPR006133">
    <property type="entry name" value="DNA-dir_DNA_pol_B_exonuc"/>
</dbReference>
<dbReference type="InterPro" id="IPR006134">
    <property type="entry name" value="DNA-dir_DNA_pol_B_multi_dom"/>
</dbReference>
<dbReference type="InterPro" id="IPR043502">
    <property type="entry name" value="DNA/RNA_pol_sf"/>
</dbReference>
<dbReference type="InterPro" id="IPR042087">
    <property type="entry name" value="DNA_pol_B_thumb"/>
</dbReference>
<dbReference type="InterPro" id="IPR023211">
    <property type="entry name" value="DNA_pol_palm_dom_sf"/>
</dbReference>
<dbReference type="InterPro" id="IPR050240">
    <property type="entry name" value="DNA_pol_type-B"/>
</dbReference>
<dbReference type="InterPro" id="IPR012337">
    <property type="entry name" value="RNaseH-like_sf"/>
</dbReference>
<dbReference type="InterPro" id="IPR036397">
    <property type="entry name" value="RNaseH_sf"/>
</dbReference>
<dbReference type="PANTHER" id="PTHR10322">
    <property type="entry name" value="DNA POLYMERASE CATALYTIC SUBUNIT"/>
    <property type="match status" value="1"/>
</dbReference>
<dbReference type="PANTHER" id="PTHR10322:SF23">
    <property type="entry name" value="DNA POLYMERASE DELTA CATALYTIC SUBUNIT"/>
    <property type="match status" value="1"/>
</dbReference>
<dbReference type="Pfam" id="PF00136">
    <property type="entry name" value="DNA_pol_B"/>
    <property type="match status" value="1"/>
</dbReference>
<dbReference type="Pfam" id="PF03104">
    <property type="entry name" value="DNA_pol_B_exo1"/>
    <property type="match status" value="1"/>
</dbReference>
<dbReference type="PRINTS" id="PR00106">
    <property type="entry name" value="DNAPOLB"/>
</dbReference>
<dbReference type="SMART" id="SM00486">
    <property type="entry name" value="POLBc"/>
    <property type="match status" value="1"/>
</dbReference>
<dbReference type="SUPFAM" id="SSF56672">
    <property type="entry name" value="DNA/RNA polymerases"/>
    <property type="match status" value="1"/>
</dbReference>
<dbReference type="SUPFAM" id="SSF53098">
    <property type="entry name" value="Ribonuclease H-like"/>
    <property type="match status" value="1"/>
</dbReference>
<dbReference type="PROSITE" id="PS00116">
    <property type="entry name" value="DNA_POLYMERASE_B"/>
    <property type="match status" value="1"/>
</dbReference>
<reference key="1">
    <citation type="journal article" date="1996" name="J. Virol.">
        <title>Determination and analysis of the complete nucleotide sequence of human herpesvirus.</title>
        <authorList>
            <person name="Nicholas J."/>
        </authorList>
    </citation>
    <scope>NUCLEOTIDE SEQUENCE [LARGE SCALE GENOMIC DNA]</scope>
</reference>
<keyword id="KW-0235">DNA replication</keyword>
<keyword id="KW-0238">DNA-binding</keyword>
<keyword id="KW-0239">DNA-directed DNA polymerase</keyword>
<keyword id="KW-1048">Host nucleus</keyword>
<keyword id="KW-0548">Nucleotidyltransferase</keyword>
<keyword id="KW-1185">Reference proteome</keyword>
<keyword id="KW-0808">Transferase</keyword>
<keyword id="KW-1194">Viral DNA replication</keyword>
<proteinExistence type="inferred from homology"/>
<organism>
    <name type="scientific">Human herpesvirus 7 (strain JI)</name>
    <name type="common">HHV-7</name>
    <name type="synonym">Human T lymphotropic virus</name>
    <dbReference type="NCBI Taxonomy" id="57278"/>
    <lineage>
        <taxon>Viruses</taxon>
        <taxon>Duplodnaviria</taxon>
        <taxon>Heunggongvirae</taxon>
        <taxon>Peploviricota</taxon>
        <taxon>Herviviricetes</taxon>
        <taxon>Herpesvirales</taxon>
        <taxon>Orthoherpesviridae</taxon>
        <taxon>Betaherpesvirinae</taxon>
        <taxon>Roseolovirus</taxon>
        <taxon>Roseolovirus humanbeta7</taxon>
        <taxon>Human betaherpesvirus 7</taxon>
    </lineage>
</organism>
<evidence type="ECO:0000305" key="1"/>
<feature type="chain" id="PRO_0000046517" description="DNA polymerase catalytic subunit">
    <location>
        <begin position="1"/>
        <end position="1012"/>
    </location>
</feature>